<gene>
    <name evidence="1" type="primary">surE</name>
    <name type="ordered locus">BURPS1710b_2368</name>
</gene>
<accession>Q3JRP0</accession>
<proteinExistence type="inferred from homology"/>
<sequence>MRILLSNDDGYLAPGLAALYEALRPLAEILVMAPEQNCSGASNSLTLSRPLSVSRSAATGFYYVNGTPTDSVHVALTGMLDTKPDLVVSGINNGQNMGDDTLYSGTVAAATEGIMFGVPAIAFSLVHKEWAHLGDAARVAAEIVRHYLDHPLPGQPLLNINIPNLPYEELKGWRVTRLGKRHPSQPVIRQTNPRGEPIYWIGAAGDALDASEGTDFHATASGYVSITPLQLDLTHTQMLAATRDWARAGSGAS</sequence>
<protein>
    <recommendedName>
        <fullName evidence="1">5'-nucleotidase SurE</fullName>
        <ecNumber evidence="1">3.1.3.5</ecNumber>
    </recommendedName>
    <alternativeName>
        <fullName evidence="1">Nucleoside 5'-monophosphate phosphohydrolase</fullName>
    </alternativeName>
</protein>
<comment type="function">
    <text evidence="1">Nucleotidase that shows phosphatase activity on nucleoside 5'-monophosphates.</text>
</comment>
<comment type="catalytic activity">
    <reaction evidence="1">
        <text>a ribonucleoside 5'-phosphate + H2O = a ribonucleoside + phosphate</text>
        <dbReference type="Rhea" id="RHEA:12484"/>
        <dbReference type="ChEBI" id="CHEBI:15377"/>
        <dbReference type="ChEBI" id="CHEBI:18254"/>
        <dbReference type="ChEBI" id="CHEBI:43474"/>
        <dbReference type="ChEBI" id="CHEBI:58043"/>
        <dbReference type="EC" id="3.1.3.5"/>
    </reaction>
</comment>
<comment type="cofactor">
    <cofactor evidence="1">
        <name>a divalent metal cation</name>
        <dbReference type="ChEBI" id="CHEBI:60240"/>
    </cofactor>
    <text evidence="1">Binds 1 divalent metal cation per subunit.</text>
</comment>
<comment type="subcellular location">
    <subcellularLocation>
        <location evidence="1">Cytoplasm</location>
    </subcellularLocation>
</comment>
<comment type="similarity">
    <text evidence="1">Belongs to the SurE nucleotidase family.</text>
</comment>
<feature type="chain" id="PRO_0000235599" description="5'-nucleotidase SurE">
    <location>
        <begin position="1"/>
        <end position="253"/>
    </location>
</feature>
<feature type="binding site" evidence="1">
    <location>
        <position position="8"/>
    </location>
    <ligand>
        <name>a divalent metal cation</name>
        <dbReference type="ChEBI" id="CHEBI:60240"/>
    </ligand>
</feature>
<feature type="binding site" evidence="1">
    <location>
        <position position="9"/>
    </location>
    <ligand>
        <name>a divalent metal cation</name>
        <dbReference type="ChEBI" id="CHEBI:60240"/>
    </ligand>
</feature>
<feature type="binding site" evidence="1">
    <location>
        <position position="39"/>
    </location>
    <ligand>
        <name>a divalent metal cation</name>
        <dbReference type="ChEBI" id="CHEBI:60240"/>
    </ligand>
</feature>
<feature type="binding site" evidence="1">
    <location>
        <position position="92"/>
    </location>
    <ligand>
        <name>a divalent metal cation</name>
        <dbReference type="ChEBI" id="CHEBI:60240"/>
    </ligand>
</feature>
<reference key="1">
    <citation type="journal article" date="2010" name="Genome Biol. Evol.">
        <title>Continuing evolution of Burkholderia mallei through genome reduction and large-scale rearrangements.</title>
        <authorList>
            <person name="Losada L."/>
            <person name="Ronning C.M."/>
            <person name="DeShazer D."/>
            <person name="Woods D."/>
            <person name="Fedorova N."/>
            <person name="Kim H.S."/>
            <person name="Shabalina S.A."/>
            <person name="Pearson T.R."/>
            <person name="Brinkac L."/>
            <person name="Tan P."/>
            <person name="Nandi T."/>
            <person name="Crabtree J."/>
            <person name="Badger J."/>
            <person name="Beckstrom-Sternberg S."/>
            <person name="Saqib M."/>
            <person name="Schutzer S.E."/>
            <person name="Keim P."/>
            <person name="Nierman W.C."/>
        </authorList>
    </citation>
    <scope>NUCLEOTIDE SEQUENCE [LARGE SCALE GENOMIC DNA]</scope>
    <source>
        <strain>1710b</strain>
    </source>
</reference>
<evidence type="ECO:0000255" key="1">
    <source>
        <dbReference type="HAMAP-Rule" id="MF_00060"/>
    </source>
</evidence>
<name>SURE_BURP1</name>
<dbReference type="EC" id="3.1.3.5" evidence="1"/>
<dbReference type="EMBL" id="CP000124">
    <property type="protein sequence ID" value="ABA47624.1"/>
    <property type="molecule type" value="Genomic_DNA"/>
</dbReference>
<dbReference type="RefSeq" id="WP_004527164.1">
    <property type="nucleotide sequence ID" value="NC_007434.1"/>
</dbReference>
<dbReference type="SMR" id="Q3JRP0"/>
<dbReference type="EnsemblBacteria" id="ABA47624">
    <property type="protein sequence ID" value="ABA47624"/>
    <property type="gene ID" value="BURPS1710b_2368"/>
</dbReference>
<dbReference type="KEGG" id="bpm:BURPS1710b_2368"/>
<dbReference type="HOGENOM" id="CLU_045192_1_2_4"/>
<dbReference type="Proteomes" id="UP000002700">
    <property type="component" value="Chromosome I"/>
</dbReference>
<dbReference type="GO" id="GO:0005737">
    <property type="term" value="C:cytoplasm"/>
    <property type="evidence" value="ECO:0007669"/>
    <property type="project" value="UniProtKB-SubCell"/>
</dbReference>
<dbReference type="GO" id="GO:0008254">
    <property type="term" value="F:3'-nucleotidase activity"/>
    <property type="evidence" value="ECO:0007669"/>
    <property type="project" value="TreeGrafter"/>
</dbReference>
<dbReference type="GO" id="GO:0008253">
    <property type="term" value="F:5'-nucleotidase activity"/>
    <property type="evidence" value="ECO:0007669"/>
    <property type="project" value="UniProtKB-UniRule"/>
</dbReference>
<dbReference type="GO" id="GO:0004309">
    <property type="term" value="F:exopolyphosphatase activity"/>
    <property type="evidence" value="ECO:0007669"/>
    <property type="project" value="TreeGrafter"/>
</dbReference>
<dbReference type="GO" id="GO:0046872">
    <property type="term" value="F:metal ion binding"/>
    <property type="evidence" value="ECO:0007669"/>
    <property type="project" value="UniProtKB-UniRule"/>
</dbReference>
<dbReference type="GO" id="GO:0000166">
    <property type="term" value="F:nucleotide binding"/>
    <property type="evidence" value="ECO:0007669"/>
    <property type="project" value="UniProtKB-KW"/>
</dbReference>
<dbReference type="FunFam" id="3.40.1210.10:FF:000001">
    <property type="entry name" value="5'/3'-nucleotidase SurE"/>
    <property type="match status" value="1"/>
</dbReference>
<dbReference type="Gene3D" id="3.40.1210.10">
    <property type="entry name" value="Survival protein SurE-like phosphatase/nucleotidase"/>
    <property type="match status" value="1"/>
</dbReference>
<dbReference type="HAMAP" id="MF_00060">
    <property type="entry name" value="SurE"/>
    <property type="match status" value="1"/>
</dbReference>
<dbReference type="InterPro" id="IPR030048">
    <property type="entry name" value="SurE"/>
</dbReference>
<dbReference type="InterPro" id="IPR002828">
    <property type="entry name" value="SurE-like_Pase/nucleotidase"/>
</dbReference>
<dbReference type="InterPro" id="IPR036523">
    <property type="entry name" value="SurE-like_sf"/>
</dbReference>
<dbReference type="NCBIfam" id="NF001489">
    <property type="entry name" value="PRK00346.1-3"/>
    <property type="match status" value="1"/>
</dbReference>
<dbReference type="NCBIfam" id="NF001490">
    <property type="entry name" value="PRK00346.1-4"/>
    <property type="match status" value="1"/>
</dbReference>
<dbReference type="NCBIfam" id="TIGR00087">
    <property type="entry name" value="surE"/>
    <property type="match status" value="1"/>
</dbReference>
<dbReference type="PANTHER" id="PTHR30457">
    <property type="entry name" value="5'-NUCLEOTIDASE SURE"/>
    <property type="match status" value="1"/>
</dbReference>
<dbReference type="PANTHER" id="PTHR30457:SF12">
    <property type="entry name" value="5'_3'-NUCLEOTIDASE SURE"/>
    <property type="match status" value="1"/>
</dbReference>
<dbReference type="Pfam" id="PF01975">
    <property type="entry name" value="SurE"/>
    <property type="match status" value="1"/>
</dbReference>
<dbReference type="SUPFAM" id="SSF64167">
    <property type="entry name" value="SurE-like"/>
    <property type="match status" value="1"/>
</dbReference>
<keyword id="KW-0963">Cytoplasm</keyword>
<keyword id="KW-0378">Hydrolase</keyword>
<keyword id="KW-0479">Metal-binding</keyword>
<keyword id="KW-0547">Nucleotide-binding</keyword>
<organism>
    <name type="scientific">Burkholderia pseudomallei (strain 1710b)</name>
    <dbReference type="NCBI Taxonomy" id="320372"/>
    <lineage>
        <taxon>Bacteria</taxon>
        <taxon>Pseudomonadati</taxon>
        <taxon>Pseudomonadota</taxon>
        <taxon>Betaproteobacteria</taxon>
        <taxon>Burkholderiales</taxon>
        <taxon>Burkholderiaceae</taxon>
        <taxon>Burkholderia</taxon>
        <taxon>pseudomallei group</taxon>
    </lineage>
</organism>